<accession>Q97SR1</accession>
<name>SYP_STRPN</name>
<comment type="function">
    <text evidence="1">Catalyzes the attachment of proline to tRNA(Pro) in a two-step reaction: proline is first activated by ATP to form Pro-AMP and then transferred to the acceptor end of tRNA(Pro). As ProRS can inadvertently accommodate and process non-cognate amino acids such as alanine and cysteine, to avoid such errors it has two additional distinct editing activities against alanine. One activity is designated as 'pretransfer' editing and involves the tRNA(Pro)-independent hydrolysis of activated Ala-AMP. The other activity is designated 'posttransfer' editing and involves deacylation of mischarged Ala-tRNA(Pro). The misacylated Cys-tRNA(Pro) is not edited by ProRS.</text>
</comment>
<comment type="catalytic activity">
    <reaction evidence="1">
        <text>tRNA(Pro) + L-proline + ATP = L-prolyl-tRNA(Pro) + AMP + diphosphate</text>
        <dbReference type="Rhea" id="RHEA:14305"/>
        <dbReference type="Rhea" id="RHEA-COMP:9700"/>
        <dbReference type="Rhea" id="RHEA-COMP:9702"/>
        <dbReference type="ChEBI" id="CHEBI:30616"/>
        <dbReference type="ChEBI" id="CHEBI:33019"/>
        <dbReference type="ChEBI" id="CHEBI:60039"/>
        <dbReference type="ChEBI" id="CHEBI:78442"/>
        <dbReference type="ChEBI" id="CHEBI:78532"/>
        <dbReference type="ChEBI" id="CHEBI:456215"/>
        <dbReference type="EC" id="6.1.1.15"/>
    </reaction>
</comment>
<comment type="subunit">
    <text evidence="1">Homodimer.</text>
</comment>
<comment type="subcellular location">
    <subcellularLocation>
        <location evidence="1">Cytoplasm</location>
    </subcellularLocation>
</comment>
<comment type="domain">
    <text evidence="1">Consists of three domains: the N-terminal catalytic domain, the editing domain and the C-terminal anticodon-binding domain.</text>
</comment>
<comment type="similarity">
    <text evidence="1">Belongs to the class-II aminoacyl-tRNA synthetase family. ProS type 1 subfamily.</text>
</comment>
<organism>
    <name type="scientific">Streptococcus pneumoniae serotype 4 (strain ATCC BAA-334 / TIGR4)</name>
    <dbReference type="NCBI Taxonomy" id="170187"/>
    <lineage>
        <taxon>Bacteria</taxon>
        <taxon>Bacillati</taxon>
        <taxon>Bacillota</taxon>
        <taxon>Bacilli</taxon>
        <taxon>Lactobacillales</taxon>
        <taxon>Streptococcaceae</taxon>
        <taxon>Streptococcus</taxon>
    </lineage>
</organism>
<proteinExistence type="inferred from homology"/>
<gene>
    <name evidence="1" type="primary">proS</name>
    <name type="ordered locus">SP_0264</name>
</gene>
<evidence type="ECO:0000255" key="1">
    <source>
        <dbReference type="HAMAP-Rule" id="MF_01569"/>
    </source>
</evidence>
<sequence>MKQSKMPIPTLREMPSDAQVISHALMLRAGYVRQVSAGVYSYLPLANRVIEKAKNIMRQEFEKIGAVEMLAPALLSAELWRESGRYETYGEDLYKLKNREKSDFILGPTHEETFTAIVRDSVKSYKQLPLNLYQIQPKYRDEKRPRNGLLRTREFIMKDAYSFHANYDSLDSVYDEYKAAYERIFTRSGLDFKAIIGDGGAMGGKDSQEFMAITSARTDLDRWVVLDKSVASFDEIPAEVQEEIKAELLKWIVSGEDTIAYSSESSYAANLEMATNEYKPSNRVVAEEEVTRVATPDVKSIDEVAAFLNVPEEQTIKTLFYIADGELVAALLVGNDQLNEVKLKNHLGADFFDVASEEEVANVVQAGFGSLGPVGLPENIKIIADRKVQDVRNAVVGANEDDYHLTGVNPGRDFTAEYVDIREVREGEISPDGQGVLNFARGIEIGHIFKLGTRYSASMGADVLDENGRAVPIIMGCYGIGVSRLLSAVMEQHARLFVNKTPKGEYRYAWGINFPKELAPFDVHLITVNVKDEEAQALTEKLEASLMGAGYEVLTDDRNERVGVKFSDSDLIGLPIRITVGKKAADGIVEVKIKATGDTIEVHADNVLETLEILSKK</sequence>
<protein>
    <recommendedName>
        <fullName evidence="1">Proline--tRNA ligase</fullName>
        <ecNumber evidence="1">6.1.1.15</ecNumber>
    </recommendedName>
    <alternativeName>
        <fullName evidence="1">Prolyl-tRNA synthetase</fullName>
        <shortName evidence="1">ProRS</shortName>
    </alternativeName>
</protein>
<feature type="chain" id="PRO_0000248777" description="Proline--tRNA ligase">
    <location>
        <begin position="1"/>
        <end position="617"/>
    </location>
</feature>
<keyword id="KW-0030">Aminoacyl-tRNA synthetase</keyword>
<keyword id="KW-0067">ATP-binding</keyword>
<keyword id="KW-0963">Cytoplasm</keyword>
<keyword id="KW-0436">Ligase</keyword>
<keyword id="KW-0547">Nucleotide-binding</keyword>
<keyword id="KW-0648">Protein biosynthesis</keyword>
<keyword id="KW-1185">Reference proteome</keyword>
<dbReference type="EC" id="6.1.1.15" evidence="1"/>
<dbReference type="EMBL" id="AE005672">
    <property type="protein sequence ID" value="AAK74442.1"/>
    <property type="molecule type" value="Genomic_DNA"/>
</dbReference>
<dbReference type="PIR" id="A95031">
    <property type="entry name" value="A95031"/>
</dbReference>
<dbReference type="RefSeq" id="WP_000814067.1">
    <property type="nucleotide sequence ID" value="NZ_CP155539.1"/>
</dbReference>
<dbReference type="SMR" id="Q97SR1"/>
<dbReference type="PaxDb" id="170187-SP_0264"/>
<dbReference type="EnsemblBacteria" id="AAK74442">
    <property type="protein sequence ID" value="AAK74442"/>
    <property type="gene ID" value="SP_0264"/>
</dbReference>
<dbReference type="KEGG" id="spn:SP_0264"/>
<dbReference type="eggNOG" id="COG0442">
    <property type="taxonomic scope" value="Bacteria"/>
</dbReference>
<dbReference type="PhylomeDB" id="Q97SR1"/>
<dbReference type="BioCyc" id="SPNE170187:G1FZB-271-MONOMER"/>
<dbReference type="Proteomes" id="UP000000585">
    <property type="component" value="Chromosome"/>
</dbReference>
<dbReference type="GO" id="GO:0005829">
    <property type="term" value="C:cytosol"/>
    <property type="evidence" value="ECO:0007669"/>
    <property type="project" value="TreeGrafter"/>
</dbReference>
<dbReference type="GO" id="GO:0002161">
    <property type="term" value="F:aminoacyl-tRNA deacylase activity"/>
    <property type="evidence" value="ECO:0007669"/>
    <property type="project" value="InterPro"/>
</dbReference>
<dbReference type="GO" id="GO:0005524">
    <property type="term" value="F:ATP binding"/>
    <property type="evidence" value="ECO:0007669"/>
    <property type="project" value="UniProtKB-UniRule"/>
</dbReference>
<dbReference type="GO" id="GO:0140096">
    <property type="term" value="F:catalytic activity, acting on a protein"/>
    <property type="evidence" value="ECO:0007669"/>
    <property type="project" value="UniProtKB-ARBA"/>
</dbReference>
<dbReference type="GO" id="GO:0004827">
    <property type="term" value="F:proline-tRNA ligase activity"/>
    <property type="evidence" value="ECO:0007669"/>
    <property type="project" value="UniProtKB-UniRule"/>
</dbReference>
<dbReference type="GO" id="GO:0016740">
    <property type="term" value="F:transferase activity"/>
    <property type="evidence" value="ECO:0007669"/>
    <property type="project" value="UniProtKB-ARBA"/>
</dbReference>
<dbReference type="GO" id="GO:0006433">
    <property type="term" value="P:prolyl-tRNA aminoacylation"/>
    <property type="evidence" value="ECO:0007669"/>
    <property type="project" value="UniProtKB-UniRule"/>
</dbReference>
<dbReference type="CDD" id="cd04334">
    <property type="entry name" value="ProRS-INS"/>
    <property type="match status" value="1"/>
</dbReference>
<dbReference type="CDD" id="cd00861">
    <property type="entry name" value="ProRS_anticodon_short"/>
    <property type="match status" value="1"/>
</dbReference>
<dbReference type="CDD" id="cd00779">
    <property type="entry name" value="ProRS_core_prok"/>
    <property type="match status" value="1"/>
</dbReference>
<dbReference type="FunFam" id="3.30.930.10:FF:000062">
    <property type="entry name" value="Proline--tRNA ligase"/>
    <property type="match status" value="1"/>
</dbReference>
<dbReference type="FunFam" id="3.30.930.10:FF:000070">
    <property type="entry name" value="Proline--tRNA ligase"/>
    <property type="match status" value="1"/>
</dbReference>
<dbReference type="FunFam" id="3.40.50.800:FF:000011">
    <property type="entry name" value="Proline--tRNA ligase"/>
    <property type="match status" value="1"/>
</dbReference>
<dbReference type="FunFam" id="3.90.960.10:FF:000004">
    <property type="entry name" value="Proline--tRNA ligase"/>
    <property type="match status" value="1"/>
</dbReference>
<dbReference type="Gene3D" id="3.40.50.800">
    <property type="entry name" value="Anticodon-binding domain"/>
    <property type="match status" value="1"/>
</dbReference>
<dbReference type="Gene3D" id="3.30.930.10">
    <property type="entry name" value="Bira Bifunctional Protein, Domain 2"/>
    <property type="match status" value="2"/>
</dbReference>
<dbReference type="Gene3D" id="3.90.960.10">
    <property type="entry name" value="YbaK/aminoacyl-tRNA synthetase-associated domain"/>
    <property type="match status" value="1"/>
</dbReference>
<dbReference type="HAMAP" id="MF_01569">
    <property type="entry name" value="Pro_tRNA_synth_type1"/>
    <property type="match status" value="1"/>
</dbReference>
<dbReference type="InterPro" id="IPR002314">
    <property type="entry name" value="aa-tRNA-synt_IIb"/>
</dbReference>
<dbReference type="InterPro" id="IPR006195">
    <property type="entry name" value="aa-tRNA-synth_II"/>
</dbReference>
<dbReference type="InterPro" id="IPR045864">
    <property type="entry name" value="aa-tRNA-synth_II/BPL/LPL"/>
</dbReference>
<dbReference type="InterPro" id="IPR004154">
    <property type="entry name" value="Anticodon-bd"/>
</dbReference>
<dbReference type="InterPro" id="IPR036621">
    <property type="entry name" value="Anticodon-bd_dom_sf"/>
</dbReference>
<dbReference type="InterPro" id="IPR002316">
    <property type="entry name" value="Pro-tRNA-ligase_IIa"/>
</dbReference>
<dbReference type="InterPro" id="IPR004500">
    <property type="entry name" value="Pro-tRNA-synth_IIa_bac-type"/>
</dbReference>
<dbReference type="InterPro" id="IPR023717">
    <property type="entry name" value="Pro-tRNA-Synthase_IIa_type1"/>
</dbReference>
<dbReference type="InterPro" id="IPR050062">
    <property type="entry name" value="Pro-tRNA_synthetase"/>
</dbReference>
<dbReference type="InterPro" id="IPR044140">
    <property type="entry name" value="ProRS_anticodon_short"/>
</dbReference>
<dbReference type="InterPro" id="IPR033730">
    <property type="entry name" value="ProRS_core_prok"/>
</dbReference>
<dbReference type="InterPro" id="IPR036754">
    <property type="entry name" value="YbaK/aa-tRNA-synt-asso_dom_sf"/>
</dbReference>
<dbReference type="InterPro" id="IPR007214">
    <property type="entry name" value="YbaK/aa-tRNA-synth-assoc-dom"/>
</dbReference>
<dbReference type="NCBIfam" id="NF006625">
    <property type="entry name" value="PRK09194.1"/>
    <property type="match status" value="1"/>
</dbReference>
<dbReference type="NCBIfam" id="TIGR00409">
    <property type="entry name" value="proS_fam_II"/>
    <property type="match status" value="2"/>
</dbReference>
<dbReference type="PANTHER" id="PTHR42753">
    <property type="entry name" value="MITOCHONDRIAL RIBOSOME PROTEIN L39/PROLYL-TRNA LIGASE FAMILY MEMBER"/>
    <property type="match status" value="1"/>
</dbReference>
<dbReference type="PANTHER" id="PTHR42753:SF2">
    <property type="entry name" value="PROLINE--TRNA LIGASE"/>
    <property type="match status" value="1"/>
</dbReference>
<dbReference type="Pfam" id="PF03129">
    <property type="entry name" value="HGTP_anticodon"/>
    <property type="match status" value="1"/>
</dbReference>
<dbReference type="Pfam" id="PF00587">
    <property type="entry name" value="tRNA-synt_2b"/>
    <property type="match status" value="1"/>
</dbReference>
<dbReference type="Pfam" id="PF04073">
    <property type="entry name" value="tRNA_edit"/>
    <property type="match status" value="1"/>
</dbReference>
<dbReference type="PRINTS" id="PR01046">
    <property type="entry name" value="TRNASYNTHPRO"/>
</dbReference>
<dbReference type="SUPFAM" id="SSF52954">
    <property type="entry name" value="Class II aaRS ABD-related"/>
    <property type="match status" value="1"/>
</dbReference>
<dbReference type="SUPFAM" id="SSF55681">
    <property type="entry name" value="Class II aaRS and biotin synthetases"/>
    <property type="match status" value="1"/>
</dbReference>
<dbReference type="SUPFAM" id="SSF55826">
    <property type="entry name" value="YbaK/ProRS associated domain"/>
    <property type="match status" value="1"/>
</dbReference>
<dbReference type="PROSITE" id="PS50862">
    <property type="entry name" value="AA_TRNA_LIGASE_II"/>
    <property type="match status" value="1"/>
</dbReference>
<reference key="1">
    <citation type="journal article" date="2001" name="Science">
        <title>Complete genome sequence of a virulent isolate of Streptococcus pneumoniae.</title>
        <authorList>
            <person name="Tettelin H."/>
            <person name="Nelson K.E."/>
            <person name="Paulsen I.T."/>
            <person name="Eisen J.A."/>
            <person name="Read T.D."/>
            <person name="Peterson S.N."/>
            <person name="Heidelberg J.F."/>
            <person name="DeBoy R.T."/>
            <person name="Haft D.H."/>
            <person name="Dodson R.J."/>
            <person name="Durkin A.S."/>
            <person name="Gwinn M.L."/>
            <person name="Kolonay J.F."/>
            <person name="Nelson W.C."/>
            <person name="Peterson J.D."/>
            <person name="Umayam L.A."/>
            <person name="White O."/>
            <person name="Salzberg S.L."/>
            <person name="Lewis M.R."/>
            <person name="Radune D."/>
            <person name="Holtzapple E.K."/>
            <person name="Khouri H.M."/>
            <person name="Wolf A.M."/>
            <person name="Utterback T.R."/>
            <person name="Hansen C.L."/>
            <person name="McDonald L.A."/>
            <person name="Feldblyum T.V."/>
            <person name="Angiuoli S.V."/>
            <person name="Dickinson T."/>
            <person name="Hickey E.K."/>
            <person name="Holt I.E."/>
            <person name="Loftus B.J."/>
            <person name="Yang F."/>
            <person name="Smith H.O."/>
            <person name="Venter J.C."/>
            <person name="Dougherty B.A."/>
            <person name="Morrison D.A."/>
            <person name="Hollingshead S.K."/>
            <person name="Fraser C.M."/>
        </authorList>
    </citation>
    <scope>NUCLEOTIDE SEQUENCE [LARGE SCALE GENOMIC DNA]</scope>
    <source>
        <strain>ATCC BAA-334 / TIGR4</strain>
    </source>
</reference>